<protein>
    <recommendedName>
        <fullName evidence="1">Serine/threonine transporter SstT</fullName>
    </recommendedName>
    <alternativeName>
        <fullName evidence="1">Na(+)/serine-threonine symporter</fullName>
    </alternativeName>
</protein>
<dbReference type="EMBL" id="CP000302">
    <property type="protein sequence ID" value="ABE55805.1"/>
    <property type="molecule type" value="Genomic_DNA"/>
</dbReference>
<dbReference type="RefSeq" id="WP_011496956.1">
    <property type="nucleotide sequence ID" value="NC_007954.1"/>
</dbReference>
<dbReference type="SMR" id="Q12L71"/>
<dbReference type="STRING" id="318161.Sden_2525"/>
<dbReference type="KEGG" id="sdn:Sden_2525"/>
<dbReference type="eggNOG" id="COG3633">
    <property type="taxonomic scope" value="Bacteria"/>
</dbReference>
<dbReference type="HOGENOM" id="CLU_044581_0_0_6"/>
<dbReference type="OrthoDB" id="9768885at2"/>
<dbReference type="Proteomes" id="UP000001982">
    <property type="component" value="Chromosome"/>
</dbReference>
<dbReference type="GO" id="GO:0005886">
    <property type="term" value="C:plasma membrane"/>
    <property type="evidence" value="ECO:0007669"/>
    <property type="project" value="UniProtKB-SubCell"/>
</dbReference>
<dbReference type="GO" id="GO:0005295">
    <property type="term" value="F:neutral L-amino acid:sodium symporter activity"/>
    <property type="evidence" value="ECO:0007669"/>
    <property type="project" value="TreeGrafter"/>
</dbReference>
<dbReference type="GO" id="GO:0032329">
    <property type="term" value="P:serine transport"/>
    <property type="evidence" value="ECO:0007669"/>
    <property type="project" value="InterPro"/>
</dbReference>
<dbReference type="GO" id="GO:0015826">
    <property type="term" value="P:threonine transport"/>
    <property type="evidence" value="ECO:0007669"/>
    <property type="project" value="InterPro"/>
</dbReference>
<dbReference type="FunFam" id="1.10.3860.10:FF:000003">
    <property type="entry name" value="Serine/threonine transporter sstT"/>
    <property type="match status" value="1"/>
</dbReference>
<dbReference type="Gene3D" id="1.10.3860.10">
    <property type="entry name" value="Sodium:dicarboxylate symporter"/>
    <property type="match status" value="1"/>
</dbReference>
<dbReference type="HAMAP" id="MF_01582">
    <property type="entry name" value="Ser_Thr_transp_SstT"/>
    <property type="match status" value="1"/>
</dbReference>
<dbReference type="InterPro" id="IPR001991">
    <property type="entry name" value="Na-dicarboxylate_symporter"/>
</dbReference>
<dbReference type="InterPro" id="IPR036458">
    <property type="entry name" value="Na:dicarbo_symporter_sf"/>
</dbReference>
<dbReference type="InterPro" id="IPR023025">
    <property type="entry name" value="Ser_Thr_transp_SstT"/>
</dbReference>
<dbReference type="NCBIfam" id="NF010151">
    <property type="entry name" value="PRK13628.1"/>
    <property type="match status" value="1"/>
</dbReference>
<dbReference type="PANTHER" id="PTHR42865">
    <property type="entry name" value="PROTON/GLUTAMATE-ASPARTATE SYMPORTER"/>
    <property type="match status" value="1"/>
</dbReference>
<dbReference type="PANTHER" id="PTHR42865:SF8">
    <property type="entry name" value="SERINE_THREONINE TRANSPORTER SSTT"/>
    <property type="match status" value="1"/>
</dbReference>
<dbReference type="Pfam" id="PF00375">
    <property type="entry name" value="SDF"/>
    <property type="match status" value="1"/>
</dbReference>
<dbReference type="PRINTS" id="PR00173">
    <property type="entry name" value="EDTRNSPORT"/>
</dbReference>
<dbReference type="SUPFAM" id="SSF118215">
    <property type="entry name" value="Proton glutamate symport protein"/>
    <property type="match status" value="1"/>
</dbReference>
<accession>Q12L71</accession>
<evidence type="ECO:0000255" key="1">
    <source>
        <dbReference type="HAMAP-Rule" id="MF_01582"/>
    </source>
</evidence>
<sequence>MSSNPSLFSRIIHGSLVLQIIVGIALAVILASVSASAASQVAFLGDFFVGALKAIAPILVFVLVASSIANQKKNSHTNMRPIISLYLIGTFAAALTAVLLSFSFPTTLVLVTGIEGSNPPQGIAEVLNTLLFKLVDNPVNALMTGNYIGILAWGIGLGIALHHGTDATKAVLNDISHGVSQMVRFVIRLAPLGIFGLVAGTVAATGFDALAGYAQLLMVLVGAMLIMALVVNPLIVYLKIKRNPYPLVLKCLRGSGVTAFFTRSSAANIPVNMALCEELKLHEDTYSVSIPLGATVNMGGAAITITVLTLAAAHTLGVQVDFVTALLLSVMASVAACGASGVAGGSLLLIPLACSLFGISNDIAMQVVAVGFIIGVVQDSAETALNSSTDVLFTAAACEAAEAKANS</sequence>
<keyword id="KW-0029">Amino-acid transport</keyword>
<keyword id="KW-0997">Cell inner membrane</keyword>
<keyword id="KW-1003">Cell membrane</keyword>
<keyword id="KW-0472">Membrane</keyword>
<keyword id="KW-1185">Reference proteome</keyword>
<keyword id="KW-0769">Symport</keyword>
<keyword id="KW-0812">Transmembrane</keyword>
<keyword id="KW-1133">Transmembrane helix</keyword>
<keyword id="KW-0813">Transport</keyword>
<feature type="chain" id="PRO_0000309121" description="Serine/threonine transporter SstT">
    <location>
        <begin position="1"/>
        <end position="407"/>
    </location>
</feature>
<feature type="transmembrane region" description="Helical" evidence="1">
    <location>
        <begin position="11"/>
        <end position="31"/>
    </location>
</feature>
<feature type="transmembrane region" description="Helical" evidence="1">
    <location>
        <begin position="43"/>
        <end position="63"/>
    </location>
</feature>
<feature type="transmembrane region" description="Helical" evidence="1">
    <location>
        <begin position="82"/>
        <end position="102"/>
    </location>
</feature>
<feature type="transmembrane region" description="Helical" evidence="1">
    <location>
        <begin position="141"/>
        <end position="161"/>
    </location>
</feature>
<feature type="transmembrane region" description="Helical" evidence="1">
    <location>
        <begin position="192"/>
        <end position="212"/>
    </location>
</feature>
<feature type="transmembrane region" description="Helical" evidence="1">
    <location>
        <begin position="216"/>
        <end position="236"/>
    </location>
</feature>
<feature type="transmembrane region" description="Helical" evidence="1">
    <location>
        <begin position="298"/>
        <end position="318"/>
    </location>
</feature>
<feature type="transmembrane region" description="Helical" evidence="1">
    <location>
        <begin position="339"/>
        <end position="359"/>
    </location>
</feature>
<feature type="transmembrane region" description="Helical" evidence="1">
    <location>
        <begin position="363"/>
        <end position="383"/>
    </location>
</feature>
<gene>
    <name evidence="1" type="primary">sstT</name>
    <name type="ordered locus">Sden_2525</name>
</gene>
<proteinExistence type="inferred from homology"/>
<name>SSTT_SHEDO</name>
<comment type="function">
    <text evidence="1">Involved in the import of serine and threonine into the cell, with the concomitant import of sodium (symport system).</text>
</comment>
<comment type="catalytic activity">
    <reaction evidence="1">
        <text>L-serine(in) + Na(+)(in) = L-serine(out) + Na(+)(out)</text>
        <dbReference type="Rhea" id="RHEA:29575"/>
        <dbReference type="ChEBI" id="CHEBI:29101"/>
        <dbReference type="ChEBI" id="CHEBI:33384"/>
    </reaction>
    <physiologicalReaction direction="right-to-left" evidence="1">
        <dbReference type="Rhea" id="RHEA:29577"/>
    </physiologicalReaction>
</comment>
<comment type="catalytic activity">
    <reaction evidence="1">
        <text>L-threonine(in) + Na(+)(in) = L-threonine(out) + Na(+)(out)</text>
        <dbReference type="Rhea" id="RHEA:69999"/>
        <dbReference type="ChEBI" id="CHEBI:29101"/>
        <dbReference type="ChEBI" id="CHEBI:57926"/>
    </reaction>
    <physiologicalReaction direction="right-to-left" evidence="1">
        <dbReference type="Rhea" id="RHEA:70001"/>
    </physiologicalReaction>
</comment>
<comment type="subcellular location">
    <subcellularLocation>
        <location evidence="1">Cell inner membrane</location>
        <topology evidence="1">Multi-pass membrane protein</topology>
    </subcellularLocation>
</comment>
<comment type="similarity">
    <text evidence="1">Belongs to the dicarboxylate/amino acid:cation symporter (DAACS) (TC 2.A.23) family.</text>
</comment>
<reference key="1">
    <citation type="submission" date="2006-03" db="EMBL/GenBank/DDBJ databases">
        <title>Complete sequence of Shewanella denitrificans OS217.</title>
        <authorList>
            <consortium name="US DOE Joint Genome Institute"/>
            <person name="Copeland A."/>
            <person name="Lucas S."/>
            <person name="Lapidus A."/>
            <person name="Barry K."/>
            <person name="Detter J.C."/>
            <person name="Glavina del Rio T."/>
            <person name="Hammon N."/>
            <person name="Israni S."/>
            <person name="Dalin E."/>
            <person name="Tice H."/>
            <person name="Pitluck S."/>
            <person name="Brettin T."/>
            <person name="Bruce D."/>
            <person name="Han C."/>
            <person name="Tapia R."/>
            <person name="Gilna P."/>
            <person name="Kiss H."/>
            <person name="Schmutz J."/>
            <person name="Larimer F."/>
            <person name="Land M."/>
            <person name="Hauser L."/>
            <person name="Kyrpides N."/>
            <person name="Lykidis A."/>
            <person name="Richardson P."/>
        </authorList>
    </citation>
    <scope>NUCLEOTIDE SEQUENCE [LARGE SCALE GENOMIC DNA]</scope>
    <source>
        <strain>OS217 / ATCC BAA-1090 / DSM 15013</strain>
    </source>
</reference>
<organism>
    <name type="scientific">Shewanella denitrificans (strain OS217 / ATCC BAA-1090 / DSM 15013)</name>
    <dbReference type="NCBI Taxonomy" id="318161"/>
    <lineage>
        <taxon>Bacteria</taxon>
        <taxon>Pseudomonadati</taxon>
        <taxon>Pseudomonadota</taxon>
        <taxon>Gammaproteobacteria</taxon>
        <taxon>Alteromonadales</taxon>
        <taxon>Shewanellaceae</taxon>
        <taxon>Shewanella</taxon>
    </lineage>
</organism>